<sequence>MTEFWLISAPGDKTCQQTWDKMNMATAESNNLSTNNKFNIPELKVGTLDVLVGLSDELAKLDTFVESVVKKIAQYMTDVLEDSRDKVQENLLANGVDLVTYITRFQWDMAKYPIKQSLKSISEIMSKQVTQIDNDLKARASAYNSLKGSLQSLERKNVGSLLTRSLADIVKKEDFVLDSEYLTTLLVIVSKTNYPEWQKTYETLSEMVVPRSTKLLFEDQESGLFSVTLFTKAIDDFKQQARENKFMVRDFLYNEEEMKADKEEMTRLSTDKKKQFGPLVRWLKVNFSETFIAWIHIKALRVFTESVLRYGLPVNFQAMLLQPNKKNVKKLREVLKDLYKHLDSSAAVIDGSVDIPGLNLSQQEYYPYVYYKIDVNLLELK</sequence>
<proteinExistence type="evidence at transcript level"/>
<name>VTC1B_DANRE</name>
<keyword id="KW-0007">Acetylation</keyword>
<keyword id="KW-0375">Hydrogen ion transport</keyword>
<keyword id="KW-0406">Ion transport</keyword>
<keyword id="KW-1185">Reference proteome</keyword>
<keyword id="KW-0813">Transport</keyword>
<reference key="1">
    <citation type="journal article" date="2013" name="Nature">
        <title>The zebrafish reference genome sequence and its relationship to the human genome.</title>
        <authorList>
            <person name="Howe K."/>
            <person name="Clark M.D."/>
            <person name="Torroja C.F."/>
            <person name="Torrance J."/>
            <person name="Berthelot C."/>
            <person name="Muffato M."/>
            <person name="Collins J.E."/>
            <person name="Humphray S."/>
            <person name="McLaren K."/>
            <person name="Matthews L."/>
            <person name="McLaren S."/>
            <person name="Sealy I."/>
            <person name="Caccamo M."/>
            <person name="Churcher C."/>
            <person name="Scott C."/>
            <person name="Barrett J.C."/>
            <person name="Koch R."/>
            <person name="Rauch G.J."/>
            <person name="White S."/>
            <person name="Chow W."/>
            <person name="Kilian B."/>
            <person name="Quintais L.T."/>
            <person name="Guerra-Assuncao J.A."/>
            <person name="Zhou Y."/>
            <person name="Gu Y."/>
            <person name="Yen J."/>
            <person name="Vogel J.H."/>
            <person name="Eyre T."/>
            <person name="Redmond S."/>
            <person name="Banerjee R."/>
            <person name="Chi J."/>
            <person name="Fu B."/>
            <person name="Langley E."/>
            <person name="Maguire S.F."/>
            <person name="Laird G.K."/>
            <person name="Lloyd D."/>
            <person name="Kenyon E."/>
            <person name="Donaldson S."/>
            <person name="Sehra H."/>
            <person name="Almeida-King J."/>
            <person name="Loveland J."/>
            <person name="Trevanion S."/>
            <person name="Jones M."/>
            <person name="Quail M."/>
            <person name="Willey D."/>
            <person name="Hunt A."/>
            <person name="Burton J."/>
            <person name="Sims S."/>
            <person name="McLay K."/>
            <person name="Plumb B."/>
            <person name="Davis J."/>
            <person name="Clee C."/>
            <person name="Oliver K."/>
            <person name="Clark R."/>
            <person name="Riddle C."/>
            <person name="Elliot D."/>
            <person name="Threadgold G."/>
            <person name="Harden G."/>
            <person name="Ware D."/>
            <person name="Begum S."/>
            <person name="Mortimore B."/>
            <person name="Kerry G."/>
            <person name="Heath P."/>
            <person name="Phillimore B."/>
            <person name="Tracey A."/>
            <person name="Corby N."/>
            <person name="Dunn M."/>
            <person name="Johnson C."/>
            <person name="Wood J."/>
            <person name="Clark S."/>
            <person name="Pelan S."/>
            <person name="Griffiths G."/>
            <person name="Smith M."/>
            <person name="Glithero R."/>
            <person name="Howden P."/>
            <person name="Barker N."/>
            <person name="Lloyd C."/>
            <person name="Stevens C."/>
            <person name="Harley J."/>
            <person name="Holt K."/>
            <person name="Panagiotidis G."/>
            <person name="Lovell J."/>
            <person name="Beasley H."/>
            <person name="Henderson C."/>
            <person name="Gordon D."/>
            <person name="Auger K."/>
            <person name="Wright D."/>
            <person name="Collins J."/>
            <person name="Raisen C."/>
            <person name="Dyer L."/>
            <person name="Leung K."/>
            <person name="Robertson L."/>
            <person name="Ambridge K."/>
            <person name="Leongamornlert D."/>
            <person name="McGuire S."/>
            <person name="Gilderthorp R."/>
            <person name="Griffiths C."/>
            <person name="Manthravadi D."/>
            <person name="Nichol S."/>
            <person name="Barker G."/>
            <person name="Whitehead S."/>
            <person name="Kay M."/>
            <person name="Brown J."/>
            <person name="Murnane C."/>
            <person name="Gray E."/>
            <person name="Humphries M."/>
            <person name="Sycamore N."/>
            <person name="Barker D."/>
            <person name="Saunders D."/>
            <person name="Wallis J."/>
            <person name="Babbage A."/>
            <person name="Hammond S."/>
            <person name="Mashreghi-Mohammadi M."/>
            <person name="Barr L."/>
            <person name="Martin S."/>
            <person name="Wray P."/>
            <person name="Ellington A."/>
            <person name="Matthews N."/>
            <person name="Ellwood M."/>
            <person name="Woodmansey R."/>
            <person name="Clark G."/>
            <person name="Cooper J."/>
            <person name="Tromans A."/>
            <person name="Grafham D."/>
            <person name="Skuce C."/>
            <person name="Pandian R."/>
            <person name="Andrews R."/>
            <person name="Harrison E."/>
            <person name="Kimberley A."/>
            <person name="Garnett J."/>
            <person name="Fosker N."/>
            <person name="Hall R."/>
            <person name="Garner P."/>
            <person name="Kelly D."/>
            <person name="Bird C."/>
            <person name="Palmer S."/>
            <person name="Gehring I."/>
            <person name="Berger A."/>
            <person name="Dooley C.M."/>
            <person name="Ersan-Urun Z."/>
            <person name="Eser C."/>
            <person name="Geiger H."/>
            <person name="Geisler M."/>
            <person name="Karotki L."/>
            <person name="Kirn A."/>
            <person name="Konantz J."/>
            <person name="Konantz M."/>
            <person name="Oberlander M."/>
            <person name="Rudolph-Geiger S."/>
            <person name="Teucke M."/>
            <person name="Lanz C."/>
            <person name="Raddatz G."/>
            <person name="Osoegawa K."/>
            <person name="Zhu B."/>
            <person name="Rapp A."/>
            <person name="Widaa S."/>
            <person name="Langford C."/>
            <person name="Yang F."/>
            <person name="Schuster S.C."/>
            <person name="Carter N.P."/>
            <person name="Harrow J."/>
            <person name="Ning Z."/>
            <person name="Herrero J."/>
            <person name="Searle S.M."/>
            <person name="Enright A."/>
            <person name="Geisler R."/>
            <person name="Plasterk R.H."/>
            <person name="Lee C."/>
            <person name="Westerfield M."/>
            <person name="de Jong P.J."/>
            <person name="Zon L.I."/>
            <person name="Postlethwait J.H."/>
            <person name="Nusslein-Volhard C."/>
            <person name="Hubbard T.J."/>
            <person name="Roest Crollius H."/>
            <person name="Rogers J."/>
            <person name="Stemple D.L."/>
        </authorList>
    </citation>
    <scope>NUCLEOTIDE SEQUENCE [LARGE SCALE GENOMIC DNA]</scope>
    <source>
        <strain>Tuebingen</strain>
    </source>
</reference>
<reference key="2">
    <citation type="submission" date="2004-10" db="EMBL/GenBank/DDBJ databases">
        <authorList>
            <consortium name="NIH - Zebrafish Gene Collection (ZGC) project"/>
        </authorList>
    </citation>
    <scope>NUCLEOTIDE SEQUENCE [LARGE SCALE MRNA]</scope>
    <source>
        <tissue>Eye</tissue>
    </source>
</reference>
<gene>
    <name type="primary">atp6v1c1b</name>
    <name type="synonym">atp6v1c1l</name>
    <name type="ORF">si:ch211-215i13.2</name>
    <name type="ORF">zgc:92684</name>
</gene>
<evidence type="ECO:0000250" key="1"/>
<evidence type="ECO:0000250" key="2">
    <source>
        <dbReference type="UniProtKB" id="P21282"/>
    </source>
</evidence>
<evidence type="ECO:0000250" key="3">
    <source>
        <dbReference type="UniProtKB" id="P21283"/>
    </source>
</evidence>
<evidence type="ECO:0000250" key="4">
    <source>
        <dbReference type="UniProtKB" id="P31412"/>
    </source>
</evidence>
<evidence type="ECO:0000305" key="5"/>
<protein>
    <recommendedName>
        <fullName>V-type proton ATPase subunit C 1-B</fullName>
        <shortName>V-ATPase subunit C 1-B</shortName>
    </recommendedName>
    <alternativeName>
        <fullName>Vacuolar proton pump subunit C 1-B</fullName>
    </alternativeName>
</protein>
<comment type="function">
    <text evidence="2 3 4">Subunit of the V1 complex of vacuolar(H+)-ATPase (V-ATPase), a multisubunit enzyme composed of a peripheral complex (V1) that hydrolyzes ATP and a membrane integral complex (V0) that translocates protons (By similarity). V-ATPase is responsible for acidifying and maintaining the pH of intracellular compartments and in some cell types, is targeted to the plasma membrane, where it is responsible for acidifying the extracellular environment (By similarity). Subunit C is necessary for the assembly of the catalytic sector of the enzyme and is likely to have a specific function in its catalytic activity (By similarity).</text>
</comment>
<comment type="subunit">
    <text evidence="3">V-ATPase is a heteromultimeric enzyme made up of two complexes: the ATP-hydrolytic V1 complex and the proton translocation V0 complex (By similarity). The V1 complex consists of three catalytic AB heterodimers that form a heterohexamer, three peripheral stalks each consisting of EG heterodimers, one central rotor including subunits D and F, and the regulatory subunits C and H (By similarity). The proton translocation complex V0 consists of the proton transport subunit a, a ring of proteolipid subunits c9c'', rotary subunit d, subunits e and f, and two accessory subunits (By similarity).</text>
</comment>
<comment type="similarity">
    <text evidence="5">Belongs to the V-ATPase C subunit family.</text>
</comment>
<organism>
    <name type="scientific">Danio rerio</name>
    <name type="common">Zebrafish</name>
    <name type="synonym">Brachydanio rerio</name>
    <dbReference type="NCBI Taxonomy" id="7955"/>
    <lineage>
        <taxon>Eukaryota</taxon>
        <taxon>Metazoa</taxon>
        <taxon>Chordata</taxon>
        <taxon>Craniata</taxon>
        <taxon>Vertebrata</taxon>
        <taxon>Euteleostomi</taxon>
        <taxon>Actinopterygii</taxon>
        <taxon>Neopterygii</taxon>
        <taxon>Teleostei</taxon>
        <taxon>Ostariophysi</taxon>
        <taxon>Cypriniformes</taxon>
        <taxon>Danionidae</taxon>
        <taxon>Danioninae</taxon>
        <taxon>Danio</taxon>
    </lineage>
</organism>
<feature type="initiator methionine" description="Removed" evidence="1">
    <location>
        <position position="1"/>
    </location>
</feature>
<feature type="chain" id="PRO_0000285667" description="V-type proton ATPase subunit C 1-B">
    <location>
        <begin position="2"/>
        <end position="381"/>
    </location>
</feature>
<feature type="modified residue" description="N-acetylthreonine" evidence="1">
    <location>
        <position position="2"/>
    </location>
</feature>
<accession>Q5XIY6</accession>
<accession>Q801V4</accession>
<dbReference type="EMBL" id="AL807244">
    <property type="protein sequence ID" value="CAD87802.2"/>
    <property type="molecule type" value="Genomic_DNA"/>
</dbReference>
<dbReference type="EMBL" id="BC083532">
    <property type="protein sequence ID" value="AAH83532.1"/>
    <property type="molecule type" value="mRNA"/>
</dbReference>
<dbReference type="RefSeq" id="NP_001005772.2">
    <property type="nucleotide sequence ID" value="NM_001005772.2"/>
</dbReference>
<dbReference type="SMR" id="Q5XIY6"/>
<dbReference type="FunCoup" id="Q5XIY6">
    <property type="interactions" value="1703"/>
</dbReference>
<dbReference type="STRING" id="7955.ENSDARP00000052090"/>
<dbReference type="PaxDb" id="7955-ENSDARP00000052090"/>
<dbReference type="Ensembl" id="ENSDART00000052091">
    <property type="protein sequence ID" value="ENSDARP00000052090"/>
    <property type="gene ID" value="ENSDARG00000035880"/>
</dbReference>
<dbReference type="Ensembl" id="ENSDART00000180493">
    <property type="protein sequence ID" value="ENSDARP00000147230"/>
    <property type="gene ID" value="ENSDARG00000112507"/>
</dbReference>
<dbReference type="GeneID" id="449655"/>
<dbReference type="KEGG" id="dre:449655"/>
<dbReference type="AGR" id="ZFIN:ZDB-GENE-041010-104"/>
<dbReference type="CTD" id="449655"/>
<dbReference type="ZFIN" id="ZDB-GENE-041010-104">
    <property type="gene designation" value="atp6v1c1b"/>
</dbReference>
<dbReference type="eggNOG" id="KOG2909">
    <property type="taxonomic scope" value="Eukaryota"/>
</dbReference>
<dbReference type="HOGENOM" id="CLU_017554_3_0_1"/>
<dbReference type="InParanoid" id="Q5XIY6"/>
<dbReference type="OMA" id="VMIWIHV"/>
<dbReference type="OrthoDB" id="6605928at2759"/>
<dbReference type="PhylomeDB" id="Q5XIY6"/>
<dbReference type="TreeFam" id="TF314912"/>
<dbReference type="PRO" id="PR:Q5XIY6"/>
<dbReference type="Proteomes" id="UP000000437">
    <property type="component" value="Alternate scaffold 19"/>
</dbReference>
<dbReference type="Proteomes" id="UP000000437">
    <property type="component" value="Chromosome 19"/>
</dbReference>
<dbReference type="Bgee" id="ENSDARG00000035880">
    <property type="expression patterns" value="Expressed in pharyngeal gill and 28 other cell types or tissues"/>
</dbReference>
<dbReference type="GO" id="GO:0000221">
    <property type="term" value="C:vacuolar proton-transporting V-type ATPase, V1 domain"/>
    <property type="evidence" value="ECO:0000318"/>
    <property type="project" value="GO_Central"/>
</dbReference>
<dbReference type="GO" id="GO:0046961">
    <property type="term" value="F:proton-transporting ATPase activity, rotational mechanism"/>
    <property type="evidence" value="ECO:0000318"/>
    <property type="project" value="GO_Central"/>
</dbReference>
<dbReference type="CDD" id="cd14785">
    <property type="entry name" value="V-ATPase_C"/>
    <property type="match status" value="1"/>
</dbReference>
<dbReference type="FunFam" id="1.20.1460.10:FF:000004">
    <property type="entry name" value="V-type proton ATPase subunit C"/>
    <property type="match status" value="1"/>
</dbReference>
<dbReference type="FunFam" id="3.30.70.100:FF:000002">
    <property type="entry name" value="V-type proton ATPase subunit C"/>
    <property type="match status" value="1"/>
</dbReference>
<dbReference type="FunFam" id="3.30.70.1180:FF:000003">
    <property type="entry name" value="V-type proton ATPase subunit C"/>
    <property type="match status" value="1"/>
</dbReference>
<dbReference type="Gene3D" id="3.30.70.100">
    <property type="match status" value="1"/>
</dbReference>
<dbReference type="Gene3D" id="1.20.1460.10">
    <property type="entry name" value="subunit c (vma5p) of the yeast v-atpase, domain 2"/>
    <property type="match status" value="1"/>
</dbReference>
<dbReference type="Gene3D" id="3.30.70.1180">
    <property type="entry name" value="Vacuolar atp synthase subunit c, domain 1"/>
    <property type="match status" value="1"/>
</dbReference>
<dbReference type="InterPro" id="IPR004907">
    <property type="entry name" value="ATPase_V1-cplx_csu"/>
</dbReference>
<dbReference type="InterPro" id="IPR036132">
    <property type="entry name" value="Vac_ATP_synth_c_sf"/>
</dbReference>
<dbReference type="PANTHER" id="PTHR10137">
    <property type="entry name" value="V-TYPE PROTON ATPASE SUBUNIT C"/>
    <property type="match status" value="1"/>
</dbReference>
<dbReference type="PANTHER" id="PTHR10137:SF5">
    <property type="entry name" value="V-TYPE PROTON ATPASE SUBUNIT C 1"/>
    <property type="match status" value="1"/>
</dbReference>
<dbReference type="Pfam" id="PF03223">
    <property type="entry name" value="V-ATPase_C"/>
    <property type="match status" value="1"/>
</dbReference>
<dbReference type="SUPFAM" id="SSF118203">
    <property type="entry name" value="Vacuolar ATP synthase subunit C"/>
    <property type="match status" value="1"/>
</dbReference>